<comment type="subcellular location">
    <subcellularLocation>
        <location evidence="3">Membrane</location>
        <topology evidence="3">Multi-pass membrane protein</topology>
    </subcellularLocation>
</comment>
<comment type="miscellaneous">
    <text evidence="2">Present with 967 molecules/cell in log phase SD medium.</text>
</comment>
<name>YL036_YEAST</name>
<sequence>MKEAELSATESQDEIPKSNSLLIIEKLTKAVCSLYFINCFMVPSVDNLIEKYPKAIIIKIIDMILGAVTISLVIIVFFLYRKNGHFKNENKTKPKRCSKVVCPSCAARKKYPKWFQLKYLLLVSMTAFSFYFCTKIRFFFKTDQTINLHRLSQLFRLQLGWICTTALLFYFYDALILHSGFIEGYRCVNGKGAMSEGKTGQLN</sequence>
<protein>
    <recommendedName>
        <fullName>Uncharacterized protein YLR036C</fullName>
    </recommendedName>
</protein>
<gene>
    <name type="ordered locus">YLR036C</name>
</gene>
<reference evidence="3" key="1">
    <citation type="journal article" date="1997" name="Nature">
        <title>The nucleotide sequence of Saccharomyces cerevisiae chromosome XII.</title>
        <authorList>
            <person name="Johnston M."/>
            <person name="Hillier L.W."/>
            <person name="Riles L."/>
            <person name="Albermann K."/>
            <person name="Andre B."/>
            <person name="Ansorge W."/>
            <person name="Benes V."/>
            <person name="Brueckner M."/>
            <person name="Delius H."/>
            <person name="Dubois E."/>
            <person name="Duesterhoeft A."/>
            <person name="Entian K.-D."/>
            <person name="Floeth M."/>
            <person name="Goffeau A."/>
            <person name="Hebling U."/>
            <person name="Heumann K."/>
            <person name="Heuss-Neitzel D."/>
            <person name="Hilbert H."/>
            <person name="Hilger F."/>
            <person name="Kleine K."/>
            <person name="Koetter P."/>
            <person name="Louis E.J."/>
            <person name="Messenguy F."/>
            <person name="Mewes H.-W."/>
            <person name="Miosga T."/>
            <person name="Moestl D."/>
            <person name="Mueller-Auer S."/>
            <person name="Nentwich U."/>
            <person name="Obermaier B."/>
            <person name="Piravandi E."/>
            <person name="Pohl T.M."/>
            <person name="Portetelle D."/>
            <person name="Purnelle B."/>
            <person name="Rechmann S."/>
            <person name="Rieger M."/>
            <person name="Rinke M."/>
            <person name="Rose M."/>
            <person name="Scharfe M."/>
            <person name="Scherens B."/>
            <person name="Scholler P."/>
            <person name="Schwager C."/>
            <person name="Schwarz S."/>
            <person name="Underwood A.P."/>
            <person name="Urrestarazu L.A."/>
            <person name="Vandenbol M."/>
            <person name="Verhasselt P."/>
            <person name="Vierendeels F."/>
            <person name="Voet M."/>
            <person name="Volckaert G."/>
            <person name="Voss H."/>
            <person name="Wambutt R."/>
            <person name="Wedler E."/>
            <person name="Wedler H."/>
            <person name="Zimmermann F.K."/>
            <person name="Zollner A."/>
            <person name="Hani J."/>
            <person name="Hoheisel J.D."/>
        </authorList>
    </citation>
    <scope>NUCLEOTIDE SEQUENCE [LARGE SCALE GENOMIC DNA]</scope>
    <source>
        <strain>ATCC 204508 / S288c</strain>
    </source>
</reference>
<reference key="2">
    <citation type="journal article" date="2014" name="G3 (Bethesda)">
        <title>The reference genome sequence of Saccharomyces cerevisiae: Then and now.</title>
        <authorList>
            <person name="Engel S.R."/>
            <person name="Dietrich F.S."/>
            <person name="Fisk D.G."/>
            <person name="Binkley G."/>
            <person name="Balakrishnan R."/>
            <person name="Costanzo M.C."/>
            <person name="Dwight S.S."/>
            <person name="Hitz B.C."/>
            <person name="Karra K."/>
            <person name="Nash R.S."/>
            <person name="Weng S."/>
            <person name="Wong E.D."/>
            <person name="Lloyd P."/>
            <person name="Skrzypek M.S."/>
            <person name="Miyasato S.R."/>
            <person name="Simison M."/>
            <person name="Cherry J.M."/>
        </authorList>
    </citation>
    <scope>GENOME REANNOTATION</scope>
    <source>
        <strain>ATCC 204508 / S288c</strain>
    </source>
</reference>
<reference key="3">
    <citation type="journal article" date="2003" name="Nature">
        <title>Global analysis of protein expression in yeast.</title>
        <authorList>
            <person name="Ghaemmaghami S."/>
            <person name="Huh W.-K."/>
            <person name="Bower K."/>
            <person name="Howson R.W."/>
            <person name="Belle A."/>
            <person name="Dephoure N."/>
            <person name="O'Shea E.K."/>
            <person name="Weissman J.S."/>
        </authorList>
    </citation>
    <scope>LEVEL OF PROTEIN EXPRESSION [LARGE SCALE ANALYSIS]</scope>
</reference>
<proteinExistence type="evidence at protein level"/>
<evidence type="ECO:0000255" key="1"/>
<evidence type="ECO:0000269" key="2">
    <source>
    </source>
</evidence>
<evidence type="ECO:0000305" key="3"/>
<keyword id="KW-0067">ATP-binding</keyword>
<keyword id="KW-0472">Membrane</keyword>
<keyword id="KW-0547">Nucleotide-binding</keyword>
<keyword id="KW-1185">Reference proteome</keyword>
<keyword id="KW-0812">Transmembrane</keyword>
<keyword id="KW-1133">Transmembrane helix</keyword>
<accession>Q07986</accession>
<accession>D6VY39</accession>
<organism>
    <name type="scientific">Saccharomyces cerevisiae (strain ATCC 204508 / S288c)</name>
    <name type="common">Baker's yeast</name>
    <dbReference type="NCBI Taxonomy" id="559292"/>
    <lineage>
        <taxon>Eukaryota</taxon>
        <taxon>Fungi</taxon>
        <taxon>Dikarya</taxon>
        <taxon>Ascomycota</taxon>
        <taxon>Saccharomycotina</taxon>
        <taxon>Saccharomycetes</taxon>
        <taxon>Saccharomycetales</taxon>
        <taxon>Saccharomycetaceae</taxon>
        <taxon>Saccharomyces</taxon>
    </lineage>
</organism>
<feature type="chain" id="PRO_0000203232" description="Uncharacterized protein YLR036C">
    <location>
        <begin position="1"/>
        <end position="203"/>
    </location>
</feature>
<feature type="transmembrane region" description="Helical" evidence="1">
    <location>
        <begin position="60"/>
        <end position="80"/>
    </location>
</feature>
<feature type="transmembrane region" description="Helical" evidence="1">
    <location>
        <begin position="114"/>
        <end position="134"/>
    </location>
</feature>
<feature type="transmembrane region" description="Helical" evidence="1">
    <location>
        <begin position="157"/>
        <end position="177"/>
    </location>
</feature>
<feature type="binding site" evidence="3">
    <location>
        <begin position="192"/>
        <end position="199"/>
    </location>
    <ligand>
        <name>ATP</name>
        <dbReference type="ChEBI" id="CHEBI:30616"/>
    </ligand>
</feature>
<dbReference type="EMBL" id="Z73208">
    <property type="protein sequence ID" value="CAA97562.1"/>
    <property type="molecule type" value="Genomic_DNA"/>
</dbReference>
<dbReference type="EMBL" id="BK006945">
    <property type="protein sequence ID" value="DAA09355.1"/>
    <property type="molecule type" value="Genomic_DNA"/>
</dbReference>
<dbReference type="PIR" id="S64863">
    <property type="entry name" value="S64863"/>
</dbReference>
<dbReference type="RefSeq" id="NP_013137.1">
    <property type="nucleotide sequence ID" value="NM_001181923.1"/>
</dbReference>
<dbReference type="BioGRID" id="31312">
    <property type="interactions" value="48"/>
</dbReference>
<dbReference type="DIP" id="DIP-2127N"/>
<dbReference type="FunCoup" id="Q07986">
    <property type="interactions" value="29"/>
</dbReference>
<dbReference type="IntAct" id="Q07986">
    <property type="interactions" value="3"/>
</dbReference>
<dbReference type="iPTMnet" id="Q07986"/>
<dbReference type="PaxDb" id="4932-YLR036C"/>
<dbReference type="PeptideAtlas" id="Q07986"/>
<dbReference type="EnsemblFungi" id="YLR036C_mRNA">
    <property type="protein sequence ID" value="YLR036C"/>
    <property type="gene ID" value="YLR036C"/>
</dbReference>
<dbReference type="GeneID" id="850725"/>
<dbReference type="KEGG" id="sce:YLR036C"/>
<dbReference type="AGR" id="SGD:S000004026"/>
<dbReference type="SGD" id="S000004026">
    <property type="gene designation" value="YLR036C"/>
</dbReference>
<dbReference type="VEuPathDB" id="FungiDB:YLR036C"/>
<dbReference type="GeneTree" id="ENSGT00940000180819"/>
<dbReference type="HOGENOM" id="CLU_113423_0_0_1"/>
<dbReference type="InParanoid" id="Q07986"/>
<dbReference type="OMA" id="YLLLVSX"/>
<dbReference type="OrthoDB" id="4069743at2759"/>
<dbReference type="BioCyc" id="YEAST:G3O-32195-MONOMER"/>
<dbReference type="PRO" id="PR:Q07986"/>
<dbReference type="Proteomes" id="UP000002311">
    <property type="component" value="Chromosome XII"/>
</dbReference>
<dbReference type="RNAct" id="Q07986">
    <property type="molecule type" value="protein"/>
</dbReference>
<dbReference type="GO" id="GO:0016020">
    <property type="term" value="C:membrane"/>
    <property type="evidence" value="ECO:0007669"/>
    <property type="project" value="UniProtKB-SubCell"/>
</dbReference>
<dbReference type="GO" id="GO:0005524">
    <property type="term" value="F:ATP binding"/>
    <property type="evidence" value="ECO:0007669"/>
    <property type="project" value="UniProtKB-KW"/>
</dbReference>
<dbReference type="InterPro" id="IPR031427">
    <property type="entry name" value="DUF4668"/>
</dbReference>
<dbReference type="Pfam" id="PF15701">
    <property type="entry name" value="DUF4668"/>
    <property type="match status" value="1"/>
</dbReference>